<organism>
    <name type="scientific">Burkholderia pseudomallei (strain 1710b)</name>
    <dbReference type="NCBI Taxonomy" id="320372"/>
    <lineage>
        <taxon>Bacteria</taxon>
        <taxon>Pseudomonadati</taxon>
        <taxon>Pseudomonadota</taxon>
        <taxon>Betaproteobacteria</taxon>
        <taxon>Burkholderiales</taxon>
        <taxon>Burkholderiaceae</taxon>
        <taxon>Burkholderia</taxon>
        <taxon>pseudomallei group</taxon>
    </lineage>
</organism>
<reference key="1">
    <citation type="journal article" date="2010" name="Genome Biol. Evol.">
        <title>Continuing evolution of Burkholderia mallei through genome reduction and large-scale rearrangements.</title>
        <authorList>
            <person name="Losada L."/>
            <person name="Ronning C.M."/>
            <person name="DeShazer D."/>
            <person name="Woods D."/>
            <person name="Fedorova N."/>
            <person name="Kim H.S."/>
            <person name="Shabalina S.A."/>
            <person name="Pearson T.R."/>
            <person name="Brinkac L."/>
            <person name="Tan P."/>
            <person name="Nandi T."/>
            <person name="Crabtree J."/>
            <person name="Badger J."/>
            <person name="Beckstrom-Sternberg S."/>
            <person name="Saqib M."/>
            <person name="Schutzer S.E."/>
            <person name="Keim P."/>
            <person name="Nierman W.C."/>
        </authorList>
    </citation>
    <scope>NUCLEOTIDE SEQUENCE [LARGE SCALE GENOMIC DNA]</scope>
    <source>
        <strain>1710b</strain>
    </source>
</reference>
<name>SECB_BURP1</name>
<evidence type="ECO:0000255" key="1">
    <source>
        <dbReference type="HAMAP-Rule" id="MF_00821"/>
    </source>
</evidence>
<sequence length="159" mass="17671">MSDVENQPFFNIQRIYLKDLSLEQPNSPAIFLEQEMPAVEVEVDVKAERLAENVYEIVVAGTVTAKVREKVAFLVEAKQAGIFDIRNIPAEQIDPLCGIACPTILFPYLRSNIADSITRAGFPPIHLAEINFQALYEQRLAEISQQQQQGGAPNGTTLN</sequence>
<dbReference type="EMBL" id="CP000124">
    <property type="protein sequence ID" value="ABA49176.1"/>
    <property type="molecule type" value="Genomic_DNA"/>
</dbReference>
<dbReference type="RefSeq" id="WP_004198004.1">
    <property type="nucleotide sequence ID" value="NC_007434.1"/>
</dbReference>
<dbReference type="SMR" id="Q3JWH4"/>
<dbReference type="EnsemblBacteria" id="ABA49176">
    <property type="protein sequence ID" value="ABA49176"/>
    <property type="gene ID" value="BURPS1710b_0665"/>
</dbReference>
<dbReference type="GeneID" id="93058964"/>
<dbReference type="KEGG" id="bpm:BURPS1710b_0665"/>
<dbReference type="HOGENOM" id="CLU_111574_1_0_4"/>
<dbReference type="Proteomes" id="UP000002700">
    <property type="component" value="Chromosome I"/>
</dbReference>
<dbReference type="GO" id="GO:0005737">
    <property type="term" value="C:cytoplasm"/>
    <property type="evidence" value="ECO:0007669"/>
    <property type="project" value="UniProtKB-SubCell"/>
</dbReference>
<dbReference type="GO" id="GO:0051082">
    <property type="term" value="F:unfolded protein binding"/>
    <property type="evidence" value="ECO:0007669"/>
    <property type="project" value="InterPro"/>
</dbReference>
<dbReference type="GO" id="GO:0006457">
    <property type="term" value="P:protein folding"/>
    <property type="evidence" value="ECO:0007669"/>
    <property type="project" value="UniProtKB-UniRule"/>
</dbReference>
<dbReference type="GO" id="GO:0051262">
    <property type="term" value="P:protein tetramerization"/>
    <property type="evidence" value="ECO:0007669"/>
    <property type="project" value="InterPro"/>
</dbReference>
<dbReference type="GO" id="GO:0015031">
    <property type="term" value="P:protein transport"/>
    <property type="evidence" value="ECO:0007669"/>
    <property type="project" value="UniProtKB-UniRule"/>
</dbReference>
<dbReference type="Gene3D" id="3.10.420.10">
    <property type="entry name" value="SecB-like"/>
    <property type="match status" value="1"/>
</dbReference>
<dbReference type="HAMAP" id="MF_00821">
    <property type="entry name" value="SecB"/>
    <property type="match status" value="1"/>
</dbReference>
<dbReference type="InterPro" id="IPR003708">
    <property type="entry name" value="SecB"/>
</dbReference>
<dbReference type="InterPro" id="IPR035958">
    <property type="entry name" value="SecB-like_sf"/>
</dbReference>
<dbReference type="NCBIfam" id="NF004392">
    <property type="entry name" value="PRK05751.1-3"/>
    <property type="match status" value="1"/>
</dbReference>
<dbReference type="NCBIfam" id="NF004394">
    <property type="entry name" value="PRK05751.1-5"/>
    <property type="match status" value="1"/>
</dbReference>
<dbReference type="NCBIfam" id="TIGR00809">
    <property type="entry name" value="secB"/>
    <property type="match status" value="1"/>
</dbReference>
<dbReference type="PANTHER" id="PTHR36918">
    <property type="match status" value="1"/>
</dbReference>
<dbReference type="PANTHER" id="PTHR36918:SF1">
    <property type="entry name" value="PROTEIN-EXPORT PROTEIN SECB"/>
    <property type="match status" value="1"/>
</dbReference>
<dbReference type="Pfam" id="PF02556">
    <property type="entry name" value="SecB"/>
    <property type="match status" value="1"/>
</dbReference>
<dbReference type="PRINTS" id="PR01594">
    <property type="entry name" value="SECBCHAPRONE"/>
</dbReference>
<dbReference type="SUPFAM" id="SSF54611">
    <property type="entry name" value="SecB-like"/>
    <property type="match status" value="1"/>
</dbReference>
<gene>
    <name evidence="1" type="primary">secB</name>
    <name type="ordered locus">BURPS1710b_0665</name>
</gene>
<proteinExistence type="inferred from homology"/>
<protein>
    <recommendedName>
        <fullName evidence="1">Protein-export protein SecB</fullName>
    </recommendedName>
</protein>
<accession>Q3JWH4</accession>
<comment type="function">
    <text evidence="1">One of the proteins required for the normal export of preproteins out of the cell cytoplasm. It is a molecular chaperone that binds to a subset of precursor proteins, maintaining them in a translocation-competent state. It also specifically binds to its receptor SecA.</text>
</comment>
<comment type="subunit">
    <text evidence="1">Homotetramer, a dimer of dimers. One homotetramer interacts with 1 SecA dimer.</text>
</comment>
<comment type="subcellular location">
    <subcellularLocation>
        <location evidence="1">Cytoplasm</location>
    </subcellularLocation>
</comment>
<comment type="similarity">
    <text evidence="1">Belongs to the SecB family.</text>
</comment>
<keyword id="KW-0143">Chaperone</keyword>
<keyword id="KW-0963">Cytoplasm</keyword>
<keyword id="KW-0653">Protein transport</keyword>
<keyword id="KW-0811">Translocation</keyword>
<keyword id="KW-0813">Transport</keyword>
<feature type="chain" id="PRO_1000062464" description="Protein-export protein SecB">
    <location>
        <begin position="1"/>
        <end position="159"/>
    </location>
</feature>